<evidence type="ECO:0000255" key="1">
    <source>
        <dbReference type="HAMAP-Rule" id="MF_00984"/>
    </source>
</evidence>
<evidence type="ECO:0000256" key="2">
    <source>
        <dbReference type="SAM" id="MobiDB-lite"/>
    </source>
</evidence>
<evidence type="ECO:0000269" key="3">
    <source>
    </source>
</evidence>
<evidence type="ECO:0007829" key="4">
    <source>
        <dbReference type="PDB" id="6IRQ"/>
    </source>
</evidence>
<reference key="1">
    <citation type="journal article" date="1996" name="Gene">
        <title>Isolation, sequencing and overproduction of the single-stranded DNA binding protein from Pseudomonas aeruginosa PAO.</title>
        <authorList>
            <person name="Genschel J."/>
            <person name="Litz L."/>
            <person name="Thole H."/>
            <person name="Roemling U."/>
            <person name="Urbanke C."/>
        </authorList>
    </citation>
    <scope>NUCLEOTIDE SEQUENCE [GENOMIC DNA]</scope>
    <scope>PROTEIN SEQUENCE OF 2-38 AND 52-63</scope>
    <scope>SUBUNIT</scope>
    <source>
        <strain>PAO / DSM 1707</strain>
    </source>
</reference>
<reference key="2">
    <citation type="journal article" date="2000" name="Nature">
        <title>Complete genome sequence of Pseudomonas aeruginosa PAO1, an opportunistic pathogen.</title>
        <authorList>
            <person name="Stover C.K."/>
            <person name="Pham X.-Q.T."/>
            <person name="Erwin A.L."/>
            <person name="Mizoguchi S.D."/>
            <person name="Warrener P."/>
            <person name="Hickey M.J."/>
            <person name="Brinkman F.S.L."/>
            <person name="Hufnagle W.O."/>
            <person name="Kowalik D.J."/>
            <person name="Lagrou M."/>
            <person name="Garber R.L."/>
            <person name="Goltry L."/>
            <person name="Tolentino E."/>
            <person name="Westbrock-Wadman S."/>
            <person name="Yuan Y."/>
            <person name="Brody L.L."/>
            <person name="Coulter S.N."/>
            <person name="Folger K.R."/>
            <person name="Kas A."/>
            <person name="Larbig K."/>
            <person name="Lim R.M."/>
            <person name="Smith K.A."/>
            <person name="Spencer D.H."/>
            <person name="Wong G.K.-S."/>
            <person name="Wu Z."/>
            <person name="Paulsen I.T."/>
            <person name="Reizer J."/>
            <person name="Saier M.H. Jr."/>
            <person name="Hancock R.E.W."/>
            <person name="Lory S."/>
            <person name="Olson M.V."/>
        </authorList>
    </citation>
    <scope>NUCLEOTIDE SEQUENCE [LARGE SCALE GENOMIC DNA]</scope>
    <source>
        <strain>ATCC 15692 / DSM 22644 / CIP 104116 / JCM 14847 / LMG 12228 / 1C / PRS 101 / PAO1</strain>
    </source>
</reference>
<sequence>MARGVNKVILVGNVGGDPETRYMPNGNAVTNITLATSESWKDKQTGQQQERTEWHRVVFFGRLAEIAGEYLRKGSQVYVEGSLRTRKWQGQDGQDRYTTEIVVDINGNMQLLGGRPSGDDSQRAPREPMQRPQQAPQQQSRPAPQQQPAPQPAQDYDSFDDDIPF</sequence>
<comment type="function">
    <text evidence="1">Plays an important role in DNA replication, recombination and repair. Binds to ssDNA and to an array of partner proteins to recruit them to their sites of action during DNA metabolism.</text>
</comment>
<comment type="subunit">
    <text evidence="1 3">Homotetramer.</text>
</comment>
<proteinExistence type="evidence at protein level"/>
<keyword id="KW-0002">3D-structure</keyword>
<keyword id="KW-0903">Direct protein sequencing</keyword>
<keyword id="KW-0227">DNA damage</keyword>
<keyword id="KW-0233">DNA recombination</keyword>
<keyword id="KW-0234">DNA repair</keyword>
<keyword id="KW-0235">DNA replication</keyword>
<keyword id="KW-0238">DNA-binding</keyword>
<keyword id="KW-1185">Reference proteome</keyword>
<gene>
    <name type="primary">ssb</name>
    <name type="ordered locus">PA4232</name>
</gene>
<dbReference type="EMBL" id="Z32859">
    <property type="protein sequence ID" value="CAA83688.1"/>
    <property type="molecule type" value="Genomic_DNA"/>
</dbReference>
<dbReference type="EMBL" id="AE004091">
    <property type="protein sequence ID" value="AAG07620.1"/>
    <property type="molecule type" value="Genomic_DNA"/>
</dbReference>
<dbReference type="PIR" id="JC5485">
    <property type="entry name" value="S44302"/>
</dbReference>
<dbReference type="RefSeq" id="NP_252922.1">
    <property type="nucleotide sequence ID" value="NC_002516.2"/>
</dbReference>
<dbReference type="RefSeq" id="WP_003114685.1">
    <property type="nucleotide sequence ID" value="NZ_QZGE01000028.1"/>
</dbReference>
<dbReference type="PDB" id="5YUN">
    <property type="method" value="X-ray"/>
    <property type="resolution" value="2.67 A"/>
    <property type="chains" value="A/B/C/D=1-115"/>
</dbReference>
<dbReference type="PDB" id="5YUO">
    <property type="method" value="X-ray"/>
    <property type="resolution" value="2.04 A"/>
    <property type="chains" value="A/B/C/D=1-115"/>
</dbReference>
<dbReference type="PDB" id="6IRQ">
    <property type="method" value="X-ray"/>
    <property type="resolution" value="1.91 A"/>
    <property type="chains" value="A/B/C/D=1-115"/>
</dbReference>
<dbReference type="PDB" id="6JDG">
    <property type="method" value="X-ray"/>
    <property type="resolution" value="2.39 A"/>
    <property type="chains" value="A/B/C/D=1-115"/>
</dbReference>
<dbReference type="PDB" id="7VUM">
    <property type="method" value="X-ray"/>
    <property type="resolution" value="2.32 A"/>
    <property type="chains" value="A/B/C/D=1-115"/>
</dbReference>
<dbReference type="PDBsum" id="5YUN"/>
<dbReference type="PDBsum" id="5YUO"/>
<dbReference type="PDBsum" id="6IRQ"/>
<dbReference type="PDBsum" id="6JDG"/>
<dbReference type="PDBsum" id="7VUM"/>
<dbReference type="SMR" id="P40947"/>
<dbReference type="FunCoup" id="P40947">
    <property type="interactions" value="505"/>
</dbReference>
<dbReference type="STRING" id="208964.PA4232"/>
<dbReference type="PaxDb" id="208964-PA4232"/>
<dbReference type="GeneID" id="77219229"/>
<dbReference type="GeneID" id="881822"/>
<dbReference type="KEGG" id="pae:PA4232"/>
<dbReference type="PATRIC" id="fig|208964.12.peg.4433"/>
<dbReference type="PseudoCAP" id="PA4232"/>
<dbReference type="HOGENOM" id="CLU_078758_0_2_6"/>
<dbReference type="InParanoid" id="P40947"/>
<dbReference type="OrthoDB" id="9809878at2"/>
<dbReference type="PhylomeDB" id="P40947"/>
<dbReference type="BioCyc" id="PAER208964:G1FZ6-4305-MONOMER"/>
<dbReference type="Proteomes" id="UP000002438">
    <property type="component" value="Chromosome"/>
</dbReference>
<dbReference type="GO" id="GO:0009295">
    <property type="term" value="C:nucleoid"/>
    <property type="evidence" value="ECO:0000318"/>
    <property type="project" value="GO_Central"/>
</dbReference>
<dbReference type="GO" id="GO:0008047">
    <property type="term" value="F:enzyme activator activity"/>
    <property type="evidence" value="ECO:0000318"/>
    <property type="project" value="GO_Central"/>
</dbReference>
<dbReference type="GO" id="GO:0003697">
    <property type="term" value="F:single-stranded DNA binding"/>
    <property type="evidence" value="ECO:0000318"/>
    <property type="project" value="GO_Central"/>
</dbReference>
<dbReference type="GO" id="GO:0006310">
    <property type="term" value="P:DNA recombination"/>
    <property type="evidence" value="ECO:0007669"/>
    <property type="project" value="UniProtKB-UniRule"/>
</dbReference>
<dbReference type="GO" id="GO:0006281">
    <property type="term" value="P:DNA repair"/>
    <property type="evidence" value="ECO:0007669"/>
    <property type="project" value="UniProtKB-UniRule"/>
</dbReference>
<dbReference type="GO" id="GO:0006260">
    <property type="term" value="P:DNA replication"/>
    <property type="evidence" value="ECO:0000318"/>
    <property type="project" value="GO_Central"/>
</dbReference>
<dbReference type="CDD" id="cd04496">
    <property type="entry name" value="SSB_OBF"/>
    <property type="match status" value="1"/>
</dbReference>
<dbReference type="FunFam" id="2.40.50.140:FF:000065">
    <property type="entry name" value="Single-stranded DNA-binding protein"/>
    <property type="match status" value="1"/>
</dbReference>
<dbReference type="Gene3D" id="2.40.50.140">
    <property type="entry name" value="Nucleic acid-binding proteins"/>
    <property type="match status" value="1"/>
</dbReference>
<dbReference type="HAMAP" id="MF_00984">
    <property type="entry name" value="SSB"/>
    <property type="match status" value="1"/>
</dbReference>
<dbReference type="InterPro" id="IPR012340">
    <property type="entry name" value="NA-bd_OB-fold"/>
</dbReference>
<dbReference type="InterPro" id="IPR000424">
    <property type="entry name" value="Primosome_PriB/ssb"/>
</dbReference>
<dbReference type="InterPro" id="IPR011344">
    <property type="entry name" value="ssDNA-bd"/>
</dbReference>
<dbReference type="NCBIfam" id="NF004357">
    <property type="entry name" value="PRK05733.1"/>
    <property type="match status" value="1"/>
</dbReference>
<dbReference type="NCBIfam" id="TIGR00621">
    <property type="entry name" value="ssb"/>
    <property type="match status" value="1"/>
</dbReference>
<dbReference type="PANTHER" id="PTHR10302">
    <property type="entry name" value="SINGLE-STRANDED DNA-BINDING PROTEIN"/>
    <property type="match status" value="1"/>
</dbReference>
<dbReference type="PANTHER" id="PTHR10302:SF27">
    <property type="entry name" value="SINGLE-STRANDED DNA-BINDING PROTEIN"/>
    <property type="match status" value="1"/>
</dbReference>
<dbReference type="Pfam" id="PF00436">
    <property type="entry name" value="SSB"/>
    <property type="match status" value="1"/>
</dbReference>
<dbReference type="PIRSF" id="PIRSF002070">
    <property type="entry name" value="SSB"/>
    <property type="match status" value="1"/>
</dbReference>
<dbReference type="SUPFAM" id="SSF50249">
    <property type="entry name" value="Nucleic acid-binding proteins"/>
    <property type="match status" value="1"/>
</dbReference>
<dbReference type="PROSITE" id="PS50935">
    <property type="entry name" value="SSB"/>
    <property type="match status" value="1"/>
</dbReference>
<organism>
    <name type="scientific">Pseudomonas aeruginosa (strain ATCC 15692 / DSM 22644 / CIP 104116 / JCM 14847 / LMG 12228 / 1C / PRS 101 / PAO1)</name>
    <dbReference type="NCBI Taxonomy" id="208964"/>
    <lineage>
        <taxon>Bacteria</taxon>
        <taxon>Pseudomonadati</taxon>
        <taxon>Pseudomonadota</taxon>
        <taxon>Gammaproteobacteria</taxon>
        <taxon>Pseudomonadales</taxon>
        <taxon>Pseudomonadaceae</taxon>
        <taxon>Pseudomonas</taxon>
    </lineage>
</organism>
<feature type="initiator methionine" description="Removed" evidence="3">
    <location>
        <position position="1"/>
    </location>
</feature>
<feature type="chain" id="PRO_0000096078" description="Single-stranded DNA-binding protein">
    <location>
        <begin position="2"/>
        <end position="165"/>
    </location>
</feature>
<feature type="domain" description="SSB" evidence="1">
    <location>
        <begin position="5"/>
        <end position="110"/>
    </location>
</feature>
<feature type="region of interest" description="Disordered" evidence="2">
    <location>
        <begin position="109"/>
        <end position="165"/>
    </location>
</feature>
<feature type="short sequence motif" description="Important for interaction with partner proteins" evidence="1">
    <location>
        <begin position="160"/>
        <end position="165"/>
    </location>
</feature>
<feature type="compositionally biased region" description="Basic and acidic residues" evidence="2">
    <location>
        <begin position="117"/>
        <end position="129"/>
    </location>
</feature>
<feature type="compositionally biased region" description="Low complexity" evidence="2">
    <location>
        <begin position="130"/>
        <end position="144"/>
    </location>
</feature>
<feature type="strand" evidence="4">
    <location>
        <begin position="5"/>
        <end position="14"/>
    </location>
</feature>
<feature type="strand" evidence="4">
    <location>
        <begin position="19"/>
        <end position="22"/>
    </location>
</feature>
<feature type="strand" evidence="4">
    <location>
        <begin position="28"/>
        <end position="39"/>
    </location>
</feature>
<feature type="strand" evidence="4">
    <location>
        <begin position="50"/>
        <end position="60"/>
    </location>
</feature>
<feature type="helix" evidence="4">
    <location>
        <begin position="62"/>
        <end position="70"/>
    </location>
</feature>
<feature type="strand" evidence="4">
    <location>
        <begin position="76"/>
        <end position="89"/>
    </location>
</feature>
<feature type="strand" evidence="4">
    <location>
        <begin position="95"/>
        <end position="104"/>
    </location>
</feature>
<feature type="strand" evidence="4">
    <location>
        <begin position="108"/>
        <end position="111"/>
    </location>
</feature>
<protein>
    <recommendedName>
        <fullName evidence="1">Single-stranded DNA-binding protein</fullName>
        <shortName evidence="1">SSB</shortName>
    </recommendedName>
</protein>
<name>SSB_PSEAE</name>
<accession>P40947</accession>